<proteinExistence type="inferred from homology"/>
<dbReference type="EC" id="2.1.1.163" evidence="1"/>
<dbReference type="EC" id="2.1.1.201" evidence="1"/>
<dbReference type="EMBL" id="CP001150">
    <property type="protein sequence ID" value="ACM02598.1"/>
    <property type="molecule type" value="Genomic_DNA"/>
</dbReference>
<dbReference type="RefSeq" id="WP_002721909.1">
    <property type="nucleotide sequence ID" value="NC_011963.1"/>
</dbReference>
<dbReference type="SMR" id="B9KQJ8"/>
<dbReference type="GeneID" id="67448109"/>
<dbReference type="KEGG" id="rsk:RSKD131_2738"/>
<dbReference type="HOGENOM" id="CLU_037990_0_0_5"/>
<dbReference type="UniPathway" id="UPA00079">
    <property type="reaction ID" value="UER00169"/>
</dbReference>
<dbReference type="UniPathway" id="UPA00232"/>
<dbReference type="GO" id="GO:0008425">
    <property type="term" value="F:2-methoxy-6-polyprenyl-1,4-benzoquinol methyltransferase activity"/>
    <property type="evidence" value="ECO:0007669"/>
    <property type="project" value="UniProtKB-UniRule"/>
</dbReference>
<dbReference type="GO" id="GO:0043770">
    <property type="term" value="F:demethylmenaquinone methyltransferase activity"/>
    <property type="evidence" value="ECO:0007669"/>
    <property type="project" value="UniProtKB-UniRule"/>
</dbReference>
<dbReference type="GO" id="GO:0009060">
    <property type="term" value="P:aerobic respiration"/>
    <property type="evidence" value="ECO:0007669"/>
    <property type="project" value="UniProtKB-UniRule"/>
</dbReference>
<dbReference type="GO" id="GO:0009234">
    <property type="term" value="P:menaquinone biosynthetic process"/>
    <property type="evidence" value="ECO:0007669"/>
    <property type="project" value="UniProtKB-UniRule"/>
</dbReference>
<dbReference type="GO" id="GO:0032259">
    <property type="term" value="P:methylation"/>
    <property type="evidence" value="ECO:0007669"/>
    <property type="project" value="UniProtKB-KW"/>
</dbReference>
<dbReference type="CDD" id="cd02440">
    <property type="entry name" value="AdoMet_MTases"/>
    <property type="match status" value="1"/>
</dbReference>
<dbReference type="FunFam" id="3.40.50.150:FF:000064">
    <property type="entry name" value="2-methoxy-6-polyprenyl-1,4-benzoquinol methylase, mitochondrial"/>
    <property type="match status" value="1"/>
</dbReference>
<dbReference type="Gene3D" id="3.40.50.150">
    <property type="entry name" value="Vaccinia Virus protein VP39"/>
    <property type="match status" value="1"/>
</dbReference>
<dbReference type="HAMAP" id="MF_01813">
    <property type="entry name" value="MenG_UbiE_methyltr"/>
    <property type="match status" value="1"/>
</dbReference>
<dbReference type="InterPro" id="IPR029063">
    <property type="entry name" value="SAM-dependent_MTases_sf"/>
</dbReference>
<dbReference type="InterPro" id="IPR004033">
    <property type="entry name" value="UbiE/COQ5_MeTrFase"/>
</dbReference>
<dbReference type="InterPro" id="IPR023576">
    <property type="entry name" value="UbiE/COQ5_MeTrFase_CS"/>
</dbReference>
<dbReference type="NCBIfam" id="TIGR01934">
    <property type="entry name" value="MenG_MenH_UbiE"/>
    <property type="match status" value="1"/>
</dbReference>
<dbReference type="NCBIfam" id="NF001242">
    <property type="entry name" value="PRK00216.1-3"/>
    <property type="match status" value="1"/>
</dbReference>
<dbReference type="NCBIfam" id="NF001244">
    <property type="entry name" value="PRK00216.1-5"/>
    <property type="match status" value="1"/>
</dbReference>
<dbReference type="PANTHER" id="PTHR43591:SF24">
    <property type="entry name" value="2-METHOXY-6-POLYPRENYL-1,4-BENZOQUINOL METHYLASE, MITOCHONDRIAL"/>
    <property type="match status" value="1"/>
</dbReference>
<dbReference type="PANTHER" id="PTHR43591">
    <property type="entry name" value="METHYLTRANSFERASE"/>
    <property type="match status" value="1"/>
</dbReference>
<dbReference type="Pfam" id="PF01209">
    <property type="entry name" value="Ubie_methyltran"/>
    <property type="match status" value="1"/>
</dbReference>
<dbReference type="SUPFAM" id="SSF53335">
    <property type="entry name" value="S-adenosyl-L-methionine-dependent methyltransferases"/>
    <property type="match status" value="1"/>
</dbReference>
<dbReference type="PROSITE" id="PS51608">
    <property type="entry name" value="SAM_MT_UBIE"/>
    <property type="match status" value="1"/>
</dbReference>
<dbReference type="PROSITE" id="PS01183">
    <property type="entry name" value="UBIE_1"/>
    <property type="match status" value="1"/>
</dbReference>
<dbReference type="PROSITE" id="PS01184">
    <property type="entry name" value="UBIE_2"/>
    <property type="match status" value="1"/>
</dbReference>
<keyword id="KW-0474">Menaquinone biosynthesis</keyword>
<keyword id="KW-0489">Methyltransferase</keyword>
<keyword id="KW-0949">S-adenosyl-L-methionine</keyword>
<keyword id="KW-0808">Transferase</keyword>
<keyword id="KW-0831">Ubiquinone biosynthesis</keyword>
<sequence length="250" mass="28039">MSDETSNTTHFGFRTVPEGEKAGMVHGVFTRVASKYDIMNDLMSGGVHRLWKDAMMDWLAPRPGQKLLDVAGGTGDISFRFLKRAPGAEATVCDMTESMLVEGRQRADAAQMADRLDWVVGDAMALPFASNTFDVYTISFGIRNVTRVQDALNEAYRVLKPGGRLMVLEFSQLPNPMMQWAYDRYSFNVIPVMGQIVANDRDSYQYLVESIRKFPDQETFADMIRKAGFGLVKYRNLSLGIAALHSGWKI</sequence>
<accession>B9KQJ8</accession>
<gene>
    <name evidence="1" type="primary">ubiE</name>
    <name type="ordered locus">RSKD131_2738</name>
</gene>
<name>UBIE_CERSK</name>
<reference key="1">
    <citation type="journal article" date="2009" name="J. Bacteriol.">
        <title>Complete genome sequence of Rhodobacter sphaeroides KD131.</title>
        <authorList>
            <person name="Lim S.-K."/>
            <person name="Kim S.J."/>
            <person name="Cha S.H."/>
            <person name="Oh Y.-K."/>
            <person name="Rhee H.-J."/>
            <person name="Kim M.-S."/>
            <person name="Lee J.K."/>
        </authorList>
    </citation>
    <scope>NUCLEOTIDE SEQUENCE [LARGE SCALE GENOMIC DNA]</scope>
    <source>
        <strain>KD131 / KCTC 12085</strain>
    </source>
</reference>
<protein>
    <recommendedName>
        <fullName evidence="1">Ubiquinone/menaquinone biosynthesis C-methyltransferase UbiE</fullName>
        <ecNumber evidence="1">2.1.1.163</ecNumber>
        <ecNumber evidence="1">2.1.1.201</ecNumber>
    </recommendedName>
    <alternativeName>
        <fullName evidence="1">2-methoxy-6-polyprenyl-1,4-benzoquinol methylase</fullName>
    </alternativeName>
    <alternativeName>
        <fullName evidence="1">Demethylmenaquinone methyltransferase</fullName>
    </alternativeName>
</protein>
<comment type="function">
    <text evidence="1">Methyltransferase required for the conversion of demethylmenaquinol (DMKH2) to menaquinol (MKH2) and the conversion of 2-polyprenyl-6-methoxy-1,4-benzoquinol (DDMQH2) to 2-polyprenyl-3-methyl-6-methoxy-1,4-benzoquinol (DMQH2).</text>
</comment>
<comment type="catalytic activity">
    <reaction evidence="1">
        <text>a 2-demethylmenaquinol + S-adenosyl-L-methionine = a menaquinol + S-adenosyl-L-homocysteine + H(+)</text>
        <dbReference type="Rhea" id="RHEA:42640"/>
        <dbReference type="Rhea" id="RHEA-COMP:9539"/>
        <dbReference type="Rhea" id="RHEA-COMP:9563"/>
        <dbReference type="ChEBI" id="CHEBI:15378"/>
        <dbReference type="ChEBI" id="CHEBI:18151"/>
        <dbReference type="ChEBI" id="CHEBI:55437"/>
        <dbReference type="ChEBI" id="CHEBI:57856"/>
        <dbReference type="ChEBI" id="CHEBI:59789"/>
        <dbReference type="EC" id="2.1.1.163"/>
    </reaction>
</comment>
<comment type="catalytic activity">
    <reaction evidence="1">
        <text>a 2-methoxy-6-(all-trans-polyprenyl)benzene-1,4-diol + S-adenosyl-L-methionine = a 5-methoxy-2-methyl-3-(all-trans-polyprenyl)benzene-1,4-diol + S-adenosyl-L-homocysteine + H(+)</text>
        <dbReference type="Rhea" id="RHEA:28286"/>
        <dbReference type="Rhea" id="RHEA-COMP:10858"/>
        <dbReference type="Rhea" id="RHEA-COMP:10859"/>
        <dbReference type="ChEBI" id="CHEBI:15378"/>
        <dbReference type="ChEBI" id="CHEBI:57856"/>
        <dbReference type="ChEBI" id="CHEBI:59789"/>
        <dbReference type="ChEBI" id="CHEBI:84166"/>
        <dbReference type="ChEBI" id="CHEBI:84167"/>
        <dbReference type="EC" id="2.1.1.201"/>
    </reaction>
</comment>
<comment type="pathway">
    <text evidence="1">Quinol/quinone metabolism; menaquinone biosynthesis; menaquinol from 1,4-dihydroxy-2-naphthoate: step 2/2.</text>
</comment>
<comment type="pathway">
    <text evidence="1">Cofactor biosynthesis; ubiquinone biosynthesis.</text>
</comment>
<comment type="similarity">
    <text evidence="1">Belongs to the class I-like SAM-binding methyltransferase superfamily. MenG/UbiE family.</text>
</comment>
<evidence type="ECO:0000255" key="1">
    <source>
        <dbReference type="HAMAP-Rule" id="MF_01813"/>
    </source>
</evidence>
<organism>
    <name type="scientific">Cereibacter sphaeroides (strain KD131 / KCTC 12085)</name>
    <name type="common">Rhodobacter sphaeroides</name>
    <dbReference type="NCBI Taxonomy" id="557760"/>
    <lineage>
        <taxon>Bacteria</taxon>
        <taxon>Pseudomonadati</taxon>
        <taxon>Pseudomonadota</taxon>
        <taxon>Alphaproteobacteria</taxon>
        <taxon>Rhodobacterales</taxon>
        <taxon>Paracoccaceae</taxon>
        <taxon>Cereibacter</taxon>
    </lineage>
</organism>
<feature type="chain" id="PRO_1000187798" description="Ubiquinone/menaquinone biosynthesis C-methyltransferase UbiE">
    <location>
        <begin position="1"/>
        <end position="250"/>
    </location>
</feature>
<feature type="binding site" evidence="1">
    <location>
        <position position="74"/>
    </location>
    <ligand>
        <name>S-adenosyl-L-methionine</name>
        <dbReference type="ChEBI" id="CHEBI:59789"/>
    </ligand>
</feature>
<feature type="binding site" evidence="1">
    <location>
        <position position="94"/>
    </location>
    <ligand>
        <name>S-adenosyl-L-methionine</name>
        <dbReference type="ChEBI" id="CHEBI:59789"/>
    </ligand>
</feature>
<feature type="binding site" evidence="1">
    <location>
        <begin position="122"/>
        <end position="123"/>
    </location>
    <ligand>
        <name>S-adenosyl-L-methionine</name>
        <dbReference type="ChEBI" id="CHEBI:59789"/>
    </ligand>
</feature>
<feature type="binding site" evidence="1">
    <location>
        <position position="139"/>
    </location>
    <ligand>
        <name>S-adenosyl-L-methionine</name>
        <dbReference type="ChEBI" id="CHEBI:59789"/>
    </ligand>
</feature>